<sequence>MKIKVGINGYGTIGKRVAYAVTKQDDMELIGVTKTKPDFEAYRAKELGIPVYAASEEFLPRFEKAGFEVEGTLNDLLEKVDIIVDATPGGMGEKNKQLYEKAGVKAIFQGGEKAEVAQVSFVAQANYEAALGKDYVRVVSCNTTGLVRTLNAIKDYVDYVYAVMIRRAADPNDIKRGPINAIKPSVTIPSHHGPDVQTVIPINIETSAFVVPTTIMHVHSIMVELKKPLTREDVIDIFENTTRVLLFEKEKGFESTAQLIEFARDLHREWNNLYEIAVWKESINVKGNRLFYIQAVHQESDVIPENIDAIRAMFEIAEKWESIKKTNKSLGILK</sequence>
<gene>
    <name type="primary">gap</name>
    <name type="synonym">gapDH</name>
    <name type="ordered locus">PF1874</name>
</gene>
<keyword id="KW-1284">Encapsulin nanocompartment</keyword>
<keyword id="KW-0324">Glycolysis</keyword>
<keyword id="KW-0520">NAD</keyword>
<keyword id="KW-0521">NADP</keyword>
<keyword id="KW-0560">Oxidoreductase</keyword>
<keyword id="KW-1185">Reference proteome</keyword>
<evidence type="ECO:0000250" key="1"/>
<evidence type="ECO:0000250" key="2">
    <source>
        <dbReference type="UniProtKB" id="P61880"/>
    </source>
</evidence>
<evidence type="ECO:0000305" key="3"/>
<evidence type="ECO:0000305" key="4">
    <source>
    </source>
</evidence>
<accession>P61879</accession>
<accession>P20286</accession>
<reference key="1">
    <citation type="journal article" date="1999" name="Genetics">
        <title>Divergence of the hyperthermophilic archaea Pyrococcus furiosus and P. horikoshii inferred from complete genomic sequences.</title>
        <authorList>
            <person name="Maeder D.L."/>
            <person name="Weiss R.B."/>
            <person name="Dunn D.M."/>
            <person name="Cherry J.L."/>
            <person name="Gonzalez J.M."/>
            <person name="DiRuggiero J."/>
            <person name="Robb F.T."/>
        </authorList>
    </citation>
    <scope>NUCLEOTIDE SEQUENCE [LARGE SCALE GENOMIC DNA]</scope>
    <source>
        <strain>ATCC 43587 / DSM 3638 / JCM 8422 / Vc1</strain>
    </source>
</reference>
<reference key="2">
    <citation type="journal article" date="2021" name="Nat. Commun.">
        <title>Large-scale computational discovery and analysis of virus-derived microbial nanocompartments.</title>
        <authorList>
            <person name="Andreas M.P."/>
            <person name="Giessen T.W."/>
        </authorList>
    </citation>
    <scope>PUTATIVE SUBCELLULAR LOCATION</scope>
</reference>
<feature type="chain" id="PRO_0000145730" description="Glyceraldehyde-3-phosphate dehydrogenase">
    <location>
        <begin position="1"/>
        <end position="334"/>
    </location>
</feature>
<feature type="active site" description="Nucleophile" evidence="1">
    <location>
        <position position="141"/>
    </location>
</feature>
<feature type="binding site" evidence="1">
    <location>
        <begin position="12"/>
        <end position="13"/>
    </location>
    <ligand>
        <name>NAD(+)</name>
        <dbReference type="ChEBI" id="CHEBI:57540"/>
    </ligand>
</feature>
<feature type="binding site" evidence="1">
    <location>
        <position position="111"/>
    </location>
    <ligand>
        <name>NAD(+)</name>
        <dbReference type="ChEBI" id="CHEBI:57540"/>
    </ligand>
</feature>
<feature type="binding site" evidence="1">
    <location>
        <begin position="140"/>
        <end position="142"/>
    </location>
    <ligand>
        <name>D-glyceraldehyde 3-phosphate</name>
        <dbReference type="ChEBI" id="CHEBI:59776"/>
    </ligand>
</feature>
<feature type="binding site" evidence="1">
    <location>
        <position position="167"/>
    </location>
    <ligand>
        <name>NAD(+)</name>
        <dbReference type="ChEBI" id="CHEBI:57540"/>
    </ligand>
</feature>
<feature type="binding site" evidence="1">
    <location>
        <begin position="192"/>
        <end position="193"/>
    </location>
    <ligand>
        <name>D-glyceraldehyde 3-phosphate</name>
        <dbReference type="ChEBI" id="CHEBI:59776"/>
    </ligand>
</feature>
<feature type="binding site" evidence="1">
    <location>
        <position position="298"/>
    </location>
    <ligand>
        <name>NAD(+)</name>
        <dbReference type="ChEBI" id="CHEBI:57540"/>
    </ligand>
</feature>
<protein>
    <recommendedName>
        <fullName>Glyceraldehyde-3-phosphate dehydrogenase</fullName>
        <shortName>GAPDH</shortName>
        <ecNumber>1.2.1.59</ecNumber>
    </recommendedName>
    <alternativeName>
        <fullName>NAD(P)-dependent glyceraldehyde-3-phosphate dehydrogenase</fullName>
    </alternativeName>
</protein>
<proteinExistence type="inferred from homology"/>
<comment type="function">
    <text evidence="2 4">Possible cargo protein of a type 4B encapsulin nanocompartment (Probable). Active in the presence of NAD and NADP, prefers NADP (By similarity).</text>
</comment>
<comment type="catalytic activity">
    <reaction evidence="2">
        <text>D-glyceraldehyde 3-phosphate + phosphate + NADP(+) = (2R)-3-phospho-glyceroyl phosphate + NADPH + H(+)</text>
        <dbReference type="Rhea" id="RHEA:10296"/>
        <dbReference type="ChEBI" id="CHEBI:15378"/>
        <dbReference type="ChEBI" id="CHEBI:43474"/>
        <dbReference type="ChEBI" id="CHEBI:57604"/>
        <dbReference type="ChEBI" id="CHEBI:57783"/>
        <dbReference type="ChEBI" id="CHEBI:58349"/>
        <dbReference type="ChEBI" id="CHEBI:59776"/>
        <dbReference type="EC" id="1.2.1.59"/>
    </reaction>
</comment>
<comment type="catalytic activity">
    <reaction evidence="2">
        <text>D-glyceraldehyde 3-phosphate + phosphate + NAD(+) = (2R)-3-phospho-glyceroyl phosphate + NADH + H(+)</text>
        <dbReference type="Rhea" id="RHEA:10300"/>
        <dbReference type="ChEBI" id="CHEBI:15378"/>
        <dbReference type="ChEBI" id="CHEBI:43474"/>
        <dbReference type="ChEBI" id="CHEBI:57540"/>
        <dbReference type="ChEBI" id="CHEBI:57604"/>
        <dbReference type="ChEBI" id="CHEBI:57945"/>
        <dbReference type="ChEBI" id="CHEBI:59776"/>
        <dbReference type="EC" id="1.2.1.59"/>
    </reaction>
</comment>
<comment type="pathway">
    <text>Carbohydrate degradation; glycolysis; pyruvate from D-glyceraldehyde 3-phosphate: step 1/5.</text>
</comment>
<comment type="subunit">
    <text evidence="1">Homotetramer.</text>
</comment>
<comment type="subcellular location">
    <subcellularLocation>
        <location evidence="4">Encapsulin nanocompartment</location>
    </subcellularLocation>
    <text evidence="4">Its location in a locus with a type 4B encapsulin shell protein suggests it might be located in an encapsulin nanocompartment.</text>
</comment>
<comment type="similarity">
    <text evidence="3">Belongs to the glyceraldehyde-3-phosphate dehydrogenase family.</text>
</comment>
<dbReference type="EC" id="1.2.1.59"/>
<dbReference type="EMBL" id="AE009950">
    <property type="protein sequence ID" value="AAL81998.1"/>
    <property type="molecule type" value="Genomic_DNA"/>
</dbReference>
<dbReference type="RefSeq" id="WP_011013013.1">
    <property type="nucleotide sequence ID" value="NZ_CP023154.1"/>
</dbReference>
<dbReference type="SMR" id="P61879"/>
<dbReference type="STRING" id="186497.PF1874"/>
<dbReference type="PaxDb" id="186497-PF1874"/>
<dbReference type="KEGG" id="pfu:PF1874"/>
<dbReference type="PATRIC" id="fig|186497.12.peg.1945"/>
<dbReference type="eggNOG" id="arCOG00493">
    <property type="taxonomic scope" value="Archaea"/>
</dbReference>
<dbReference type="HOGENOM" id="CLU_069533_0_0_2"/>
<dbReference type="OrthoDB" id="295712at2157"/>
<dbReference type="PhylomeDB" id="P61879"/>
<dbReference type="BRENDA" id="1.2.1.59">
    <property type="organism ID" value="5243"/>
</dbReference>
<dbReference type="UniPathway" id="UPA00109">
    <property type="reaction ID" value="UER00184"/>
</dbReference>
<dbReference type="Proteomes" id="UP000001013">
    <property type="component" value="Chromosome"/>
</dbReference>
<dbReference type="GO" id="GO:0005737">
    <property type="term" value="C:cytoplasm"/>
    <property type="evidence" value="ECO:0007669"/>
    <property type="project" value="UniProtKB-UniRule"/>
</dbReference>
<dbReference type="GO" id="GO:0140737">
    <property type="term" value="C:encapsulin nanocompartment"/>
    <property type="evidence" value="ECO:0007669"/>
    <property type="project" value="UniProtKB-SubCell"/>
</dbReference>
<dbReference type="GO" id="GO:0008839">
    <property type="term" value="F:4-hydroxy-tetrahydrodipicolinate reductase"/>
    <property type="evidence" value="ECO:0007669"/>
    <property type="project" value="InterPro"/>
</dbReference>
<dbReference type="GO" id="GO:0004365">
    <property type="term" value="F:glyceraldehyde-3-phosphate dehydrogenase (NAD+) (phosphorylating) activity"/>
    <property type="evidence" value="ECO:0007669"/>
    <property type="project" value="UniProtKB-UniRule"/>
</dbReference>
<dbReference type="GO" id="GO:0047100">
    <property type="term" value="F:glyceraldehyde-3-phosphate dehydrogenase (NADP+) (phosphorylating) activity"/>
    <property type="evidence" value="ECO:0007669"/>
    <property type="project" value="RHEA"/>
</dbReference>
<dbReference type="GO" id="GO:0051287">
    <property type="term" value="F:NAD binding"/>
    <property type="evidence" value="ECO:0007669"/>
    <property type="project" value="InterPro"/>
</dbReference>
<dbReference type="GO" id="GO:0050661">
    <property type="term" value="F:NADP binding"/>
    <property type="evidence" value="ECO:0007669"/>
    <property type="project" value="InterPro"/>
</dbReference>
<dbReference type="GO" id="GO:0006096">
    <property type="term" value="P:glycolytic process"/>
    <property type="evidence" value="ECO:0007669"/>
    <property type="project" value="UniProtKB-UniRule"/>
</dbReference>
<dbReference type="GO" id="GO:0009089">
    <property type="term" value="P:lysine biosynthetic process via diaminopimelate"/>
    <property type="evidence" value="ECO:0007669"/>
    <property type="project" value="InterPro"/>
</dbReference>
<dbReference type="CDD" id="cd18127">
    <property type="entry name" value="GAPDH_II_C"/>
    <property type="match status" value="1"/>
</dbReference>
<dbReference type="CDD" id="cd02278">
    <property type="entry name" value="GAPDH_II_N"/>
    <property type="match status" value="1"/>
</dbReference>
<dbReference type="Gene3D" id="3.30.360.10">
    <property type="entry name" value="Dihydrodipicolinate Reductase, domain 2"/>
    <property type="match status" value="1"/>
</dbReference>
<dbReference type="Gene3D" id="3.40.50.720">
    <property type="entry name" value="NAD(P)-binding Rossmann-like Domain"/>
    <property type="match status" value="1"/>
</dbReference>
<dbReference type="HAMAP" id="MF_00559">
    <property type="entry name" value="G3P_dehdrog_arch"/>
    <property type="match status" value="1"/>
</dbReference>
<dbReference type="InterPro" id="IPR000846">
    <property type="entry name" value="DapB_N"/>
</dbReference>
<dbReference type="InterPro" id="IPR020831">
    <property type="entry name" value="GlycerAld/Erythrose_P_DH"/>
</dbReference>
<dbReference type="InterPro" id="IPR020830">
    <property type="entry name" value="GlycerAld_3-P_DH_AS"/>
</dbReference>
<dbReference type="InterPro" id="IPR020829">
    <property type="entry name" value="GlycerAld_3-P_DH_cat"/>
</dbReference>
<dbReference type="InterPro" id="IPR020828">
    <property type="entry name" value="GlycerAld_3-P_DH_NAD(P)-bd"/>
</dbReference>
<dbReference type="InterPro" id="IPR006436">
    <property type="entry name" value="Glyceraldehyde-3-P_DH_2_arc"/>
</dbReference>
<dbReference type="InterPro" id="IPR036291">
    <property type="entry name" value="NAD(P)-bd_dom_sf"/>
</dbReference>
<dbReference type="NCBIfam" id="TIGR01546">
    <property type="entry name" value="GAPDH-II_archae"/>
    <property type="match status" value="1"/>
</dbReference>
<dbReference type="NCBIfam" id="NF003251">
    <property type="entry name" value="PRK04207.1"/>
    <property type="match status" value="1"/>
</dbReference>
<dbReference type="Pfam" id="PF01113">
    <property type="entry name" value="DapB_N"/>
    <property type="match status" value="1"/>
</dbReference>
<dbReference type="Pfam" id="PF02800">
    <property type="entry name" value="Gp_dh_C"/>
    <property type="match status" value="1"/>
</dbReference>
<dbReference type="PIRSF" id="PIRSF000149">
    <property type="entry name" value="GAP_DH"/>
    <property type="match status" value="1"/>
</dbReference>
<dbReference type="SMART" id="SM00846">
    <property type="entry name" value="Gp_dh_N"/>
    <property type="match status" value="1"/>
</dbReference>
<dbReference type="SUPFAM" id="SSF55347">
    <property type="entry name" value="Glyceraldehyde-3-phosphate dehydrogenase-like, C-terminal domain"/>
    <property type="match status" value="1"/>
</dbReference>
<dbReference type="SUPFAM" id="SSF51735">
    <property type="entry name" value="NAD(P)-binding Rossmann-fold domains"/>
    <property type="match status" value="1"/>
</dbReference>
<dbReference type="PROSITE" id="PS00071">
    <property type="entry name" value="GAPDH"/>
    <property type="match status" value="1"/>
</dbReference>
<organism>
    <name type="scientific">Pyrococcus furiosus (strain ATCC 43587 / DSM 3638 / JCM 8422 / Vc1)</name>
    <dbReference type="NCBI Taxonomy" id="186497"/>
    <lineage>
        <taxon>Archaea</taxon>
        <taxon>Methanobacteriati</taxon>
        <taxon>Methanobacteriota</taxon>
        <taxon>Thermococci</taxon>
        <taxon>Thermococcales</taxon>
        <taxon>Thermococcaceae</taxon>
        <taxon>Pyrococcus</taxon>
    </lineage>
</organism>
<name>G3P_PYRFU</name>